<accession>Q12FC7</accession>
<proteinExistence type="inferred from homology"/>
<reference key="1">
    <citation type="journal article" date="2008" name="Appl. Environ. Microbiol.">
        <title>The genome of Polaromonas sp. strain JS666: insights into the evolution of a hydrocarbon- and xenobiotic-degrading bacterium, and features of relevance to biotechnology.</title>
        <authorList>
            <person name="Mattes T.E."/>
            <person name="Alexander A.K."/>
            <person name="Richardson P.M."/>
            <person name="Munk A.C."/>
            <person name="Han C.S."/>
            <person name="Stothard P."/>
            <person name="Coleman N.V."/>
        </authorList>
    </citation>
    <scope>NUCLEOTIDE SEQUENCE [LARGE SCALE GENOMIC DNA]</scope>
    <source>
        <strain>JS666 / ATCC BAA-500</strain>
    </source>
</reference>
<evidence type="ECO:0000255" key="1">
    <source>
        <dbReference type="HAMAP-Rule" id="MF_01013"/>
    </source>
</evidence>
<dbReference type="EC" id="4.3.2.10" evidence="1"/>
<dbReference type="EMBL" id="CP000316">
    <property type="protein sequence ID" value="ABE42765.1"/>
    <property type="molecule type" value="Genomic_DNA"/>
</dbReference>
<dbReference type="RefSeq" id="WP_011481768.1">
    <property type="nucleotide sequence ID" value="NC_007948.1"/>
</dbReference>
<dbReference type="SMR" id="Q12FC7"/>
<dbReference type="STRING" id="296591.Bpro_0809"/>
<dbReference type="KEGG" id="pol:Bpro_0809"/>
<dbReference type="eggNOG" id="COG0107">
    <property type="taxonomic scope" value="Bacteria"/>
</dbReference>
<dbReference type="HOGENOM" id="CLU_048577_4_0_4"/>
<dbReference type="OrthoDB" id="9781903at2"/>
<dbReference type="UniPathway" id="UPA00031">
    <property type="reaction ID" value="UER00010"/>
</dbReference>
<dbReference type="Proteomes" id="UP000001983">
    <property type="component" value="Chromosome"/>
</dbReference>
<dbReference type="GO" id="GO:0005737">
    <property type="term" value="C:cytoplasm"/>
    <property type="evidence" value="ECO:0007669"/>
    <property type="project" value="UniProtKB-SubCell"/>
</dbReference>
<dbReference type="GO" id="GO:0000107">
    <property type="term" value="F:imidazoleglycerol-phosphate synthase activity"/>
    <property type="evidence" value="ECO:0007669"/>
    <property type="project" value="UniProtKB-UniRule"/>
</dbReference>
<dbReference type="GO" id="GO:0016829">
    <property type="term" value="F:lyase activity"/>
    <property type="evidence" value="ECO:0007669"/>
    <property type="project" value="UniProtKB-KW"/>
</dbReference>
<dbReference type="GO" id="GO:0000105">
    <property type="term" value="P:L-histidine biosynthetic process"/>
    <property type="evidence" value="ECO:0007669"/>
    <property type="project" value="UniProtKB-UniRule"/>
</dbReference>
<dbReference type="CDD" id="cd04731">
    <property type="entry name" value="HisF"/>
    <property type="match status" value="1"/>
</dbReference>
<dbReference type="FunFam" id="3.20.20.70:FF:000006">
    <property type="entry name" value="Imidazole glycerol phosphate synthase subunit HisF"/>
    <property type="match status" value="1"/>
</dbReference>
<dbReference type="Gene3D" id="3.20.20.70">
    <property type="entry name" value="Aldolase class I"/>
    <property type="match status" value="1"/>
</dbReference>
<dbReference type="HAMAP" id="MF_01013">
    <property type="entry name" value="HisF"/>
    <property type="match status" value="1"/>
</dbReference>
<dbReference type="InterPro" id="IPR013785">
    <property type="entry name" value="Aldolase_TIM"/>
</dbReference>
<dbReference type="InterPro" id="IPR006062">
    <property type="entry name" value="His_biosynth"/>
</dbReference>
<dbReference type="InterPro" id="IPR004651">
    <property type="entry name" value="HisF"/>
</dbReference>
<dbReference type="InterPro" id="IPR050064">
    <property type="entry name" value="IGPS_HisA/HisF"/>
</dbReference>
<dbReference type="InterPro" id="IPR011060">
    <property type="entry name" value="RibuloseP-bd_barrel"/>
</dbReference>
<dbReference type="NCBIfam" id="TIGR00735">
    <property type="entry name" value="hisF"/>
    <property type="match status" value="1"/>
</dbReference>
<dbReference type="PANTHER" id="PTHR21235:SF2">
    <property type="entry name" value="IMIDAZOLE GLYCEROL PHOSPHATE SYNTHASE HISHF"/>
    <property type="match status" value="1"/>
</dbReference>
<dbReference type="PANTHER" id="PTHR21235">
    <property type="entry name" value="IMIDAZOLE GLYCEROL PHOSPHATE SYNTHASE SUBUNIT HISF/H IGP SYNTHASE SUBUNIT HISF/H"/>
    <property type="match status" value="1"/>
</dbReference>
<dbReference type="Pfam" id="PF00977">
    <property type="entry name" value="His_biosynth"/>
    <property type="match status" value="1"/>
</dbReference>
<dbReference type="SUPFAM" id="SSF51366">
    <property type="entry name" value="Ribulose-phoshate binding barrel"/>
    <property type="match status" value="1"/>
</dbReference>
<protein>
    <recommendedName>
        <fullName evidence="1">Imidazole glycerol phosphate synthase subunit HisF</fullName>
        <ecNumber evidence="1">4.3.2.10</ecNumber>
    </recommendedName>
    <alternativeName>
        <fullName evidence="1">IGP synthase cyclase subunit</fullName>
    </alternativeName>
    <alternativeName>
        <fullName evidence="1">IGP synthase subunit HisF</fullName>
    </alternativeName>
    <alternativeName>
        <fullName evidence="1">ImGP synthase subunit HisF</fullName>
        <shortName evidence="1">IGPS subunit HisF</shortName>
    </alternativeName>
</protein>
<name>HIS6_POLSJ</name>
<feature type="chain" id="PRO_1000063110" description="Imidazole glycerol phosphate synthase subunit HisF">
    <location>
        <begin position="1"/>
        <end position="259"/>
    </location>
</feature>
<feature type="active site" evidence="1">
    <location>
        <position position="11"/>
    </location>
</feature>
<feature type="active site" evidence="1">
    <location>
        <position position="130"/>
    </location>
</feature>
<comment type="function">
    <text evidence="1">IGPS catalyzes the conversion of PRFAR and glutamine to IGP, AICAR and glutamate. The HisF subunit catalyzes the cyclization activity that produces IGP and AICAR from PRFAR using the ammonia provided by the HisH subunit.</text>
</comment>
<comment type="catalytic activity">
    <reaction evidence="1">
        <text>5-[(5-phospho-1-deoxy-D-ribulos-1-ylimino)methylamino]-1-(5-phospho-beta-D-ribosyl)imidazole-4-carboxamide + L-glutamine = D-erythro-1-(imidazol-4-yl)glycerol 3-phosphate + 5-amino-1-(5-phospho-beta-D-ribosyl)imidazole-4-carboxamide + L-glutamate + H(+)</text>
        <dbReference type="Rhea" id="RHEA:24793"/>
        <dbReference type="ChEBI" id="CHEBI:15378"/>
        <dbReference type="ChEBI" id="CHEBI:29985"/>
        <dbReference type="ChEBI" id="CHEBI:58278"/>
        <dbReference type="ChEBI" id="CHEBI:58359"/>
        <dbReference type="ChEBI" id="CHEBI:58475"/>
        <dbReference type="ChEBI" id="CHEBI:58525"/>
        <dbReference type="EC" id="4.3.2.10"/>
    </reaction>
</comment>
<comment type="pathway">
    <text evidence="1">Amino-acid biosynthesis; L-histidine biosynthesis; L-histidine from 5-phospho-alpha-D-ribose 1-diphosphate: step 5/9.</text>
</comment>
<comment type="subunit">
    <text evidence="1">Heterodimer of HisH and HisF.</text>
</comment>
<comment type="subcellular location">
    <subcellularLocation>
        <location evidence="1">Cytoplasm</location>
    </subcellularLocation>
</comment>
<comment type="similarity">
    <text evidence="1">Belongs to the HisA/HisF family.</text>
</comment>
<keyword id="KW-0028">Amino-acid biosynthesis</keyword>
<keyword id="KW-0963">Cytoplasm</keyword>
<keyword id="KW-0368">Histidine biosynthesis</keyword>
<keyword id="KW-0456">Lyase</keyword>
<keyword id="KW-1185">Reference proteome</keyword>
<sequence length="259" mass="27443">MLAKRIIPCLDVTGGRVVKGVNFVELRDAGDPVEIAARYNEQGADELTFLDITATSDGRDLILHIIEAVASQVFIPLTVGGGVRTVEDVRRLLNAGADKTSFNSAALANPQVIEDASAKYGAQCIVVAIDAKRRSEEDARTRGAGWDVYSHGGRKNTGLDAVAWATEMARRGAGEILLTSMDRDGTKSGFDLALTRAVSDAVDVPVIASGGVGNLDHLADGIQLGGADAVLAASIFHYGEYTVQQAKQHMARRGIPVRM</sequence>
<organism>
    <name type="scientific">Polaromonas sp. (strain JS666 / ATCC BAA-500)</name>
    <dbReference type="NCBI Taxonomy" id="296591"/>
    <lineage>
        <taxon>Bacteria</taxon>
        <taxon>Pseudomonadati</taxon>
        <taxon>Pseudomonadota</taxon>
        <taxon>Betaproteobacteria</taxon>
        <taxon>Burkholderiales</taxon>
        <taxon>Comamonadaceae</taxon>
        <taxon>Polaromonas</taxon>
    </lineage>
</organism>
<gene>
    <name evidence="1" type="primary">hisF</name>
    <name type="ordered locus">Bpro_0809</name>
</gene>